<protein>
    <recommendedName>
        <fullName>Cytochrome c oxidase subunit 8B, mitochondrial</fullName>
    </recommendedName>
    <alternativeName>
        <fullName>Cytochrome c oxidase polypeptide VIII-1</fullName>
    </alternativeName>
    <alternativeName>
        <fullName>Cytochrome c oxidase subunit 8H</fullName>
    </alternativeName>
</protein>
<comment type="function">
    <text evidence="1">Component of the cytochrome c oxidase, the last enzyme in the mitochondrial electron transport chain which drives oxidative phosphorylation. The respiratory chain contains 3 multisubunit complexes succinate dehydrogenase (complex II, CII), ubiquinol-cytochrome c oxidoreductase (cytochrome b-c1 complex, complex III, CIII) and cytochrome c oxidase (complex IV, CIV), that cooperate to transfer electrons derived from NADH and succinate to molecular oxygen, creating an electrochemical gradient over the inner membrane that drives transmembrane transport and the ATP synthase. Cytochrome c oxidase is the component of the respiratory chain that catalyzes the reduction of oxygen to water. Electrons originating from reduced cytochrome c in the intermembrane space (IMS) are transferred via the dinuclear copper A center (CU(A)) of subunit 2 and heme A of subunit 1 to the active site in subunit 1, a binuclear center (BNC) formed by heme A3 and copper B (CU(B)). The BNC reduces molecular oxygen to 2 water molecules using 4 electrons from cytochrome c in the IMS and 4 protons from the mitochondrial matrix.</text>
</comment>
<comment type="pathway">
    <text evidence="1">Energy metabolism; oxidative phosphorylation.</text>
</comment>
<comment type="subunit">
    <text evidence="1">Component of the cytochrome c oxidase (complex IV, CIV), a multisubunit enzyme composed of 14 subunits. The complex is composed of a catalytic core of 3 subunits MT-CO1, MT-CO2 and MT-CO3, encoded in the mitochondrial DNA, and 11 supernumerary subunits COX4I, COX5A, COX5B, COX6A, COX6B, COX6C, COX7A, COX7B, COX7C, COX8 and NDUFA4, which are encoded in the nuclear genome. The complex exists as a monomer or a dimer and forms supercomplexes (SCs) in the inner mitochondrial membrane with NADH-ubiquinone oxidoreductase (complex I, CI) and ubiquinol-cytochrome c oxidoreductase (cytochrome b-c1 complex, complex III, CIII), resulting in different assemblies (supercomplex SCI(1)III(2)IV(1) and megacomplex MCI(2)III(2)IV(2)).</text>
</comment>
<comment type="subcellular location">
    <subcellularLocation>
        <location evidence="1">Mitochondrion inner membrane</location>
        <topology evidence="1">Single-pass membrane protein</topology>
    </subcellularLocation>
</comment>
<comment type="similarity">
    <text evidence="2">Belongs to the cytochrome c oxidase VIII family.</text>
</comment>
<dbReference type="PIR" id="S77991">
    <property type="entry name" value="S77991"/>
</dbReference>
<dbReference type="UniPathway" id="UPA00705"/>
<dbReference type="GO" id="GO:0005743">
    <property type="term" value="C:mitochondrial inner membrane"/>
    <property type="evidence" value="ECO:0007669"/>
    <property type="project" value="UniProtKB-SubCell"/>
</dbReference>
<dbReference type="GO" id="GO:0006119">
    <property type="term" value="P:oxidative phosphorylation"/>
    <property type="evidence" value="ECO:0007669"/>
    <property type="project" value="UniProtKB-UniPathway"/>
</dbReference>
<proteinExistence type="evidence at protein level"/>
<evidence type="ECO:0000250" key="1">
    <source>
        <dbReference type="UniProtKB" id="P10175"/>
    </source>
</evidence>
<evidence type="ECO:0000305" key="2"/>
<keyword id="KW-0903">Direct protein sequencing</keyword>
<keyword id="KW-0472">Membrane</keyword>
<keyword id="KW-0496">Mitochondrion</keyword>
<keyword id="KW-0999">Mitochondrion inner membrane</keyword>
<sequence length="20" mass="1996">VSAKPAKXXVTAGEQAIAMT</sequence>
<accession>P80983</accession>
<reference key="1">
    <citation type="journal article" date="1997" name="Eur. J. Biochem.">
        <title>The subunit structure of cytochrome-c oxidase from tuna heart and liver.</title>
        <authorList>
            <person name="Arnold S."/>
            <person name="Lee I."/>
            <person name="Kim M."/>
            <person name="Song E."/>
            <person name="Linder D."/>
            <person name="Lottspeich F."/>
            <person name="Kadenbach B."/>
        </authorList>
    </citation>
    <scope>PROTEIN SEQUENCE</scope>
    <source>
        <tissue>Heart</tissue>
        <tissue>Liver</tissue>
    </source>
</reference>
<organism>
    <name type="scientific">Thunnus obesus</name>
    <name type="common">Bigeye tuna</name>
    <dbReference type="NCBI Taxonomy" id="8241"/>
    <lineage>
        <taxon>Eukaryota</taxon>
        <taxon>Metazoa</taxon>
        <taxon>Chordata</taxon>
        <taxon>Craniata</taxon>
        <taxon>Vertebrata</taxon>
        <taxon>Euteleostomi</taxon>
        <taxon>Actinopterygii</taxon>
        <taxon>Neopterygii</taxon>
        <taxon>Teleostei</taxon>
        <taxon>Neoteleostei</taxon>
        <taxon>Acanthomorphata</taxon>
        <taxon>Pelagiaria</taxon>
        <taxon>Scombriformes</taxon>
        <taxon>Scombridae</taxon>
        <taxon>Thunnus</taxon>
    </lineage>
</organism>
<name>COX8B_THUOB</name>
<feature type="chain" id="PRO_0000150126" description="Cytochrome c oxidase subunit 8B, mitochondrial">
    <location>
        <begin position="1"/>
        <end position="20" status="greater than"/>
    </location>
</feature>
<feature type="non-terminal residue">
    <location>
        <position position="20"/>
    </location>
</feature>